<organism>
    <name type="scientific">Saimiriine herpesvirus 2 (strain 11)</name>
    <name type="common">SaHV-2</name>
    <name type="synonym">Herpesvirus saimiri</name>
    <dbReference type="NCBI Taxonomy" id="10383"/>
    <lineage>
        <taxon>Viruses</taxon>
        <taxon>Duplodnaviria</taxon>
        <taxon>Heunggongvirae</taxon>
        <taxon>Peploviricota</taxon>
        <taxon>Herviviricetes</taxon>
        <taxon>Herpesvirales</taxon>
        <taxon>Orthoherpesviridae</taxon>
        <taxon>Gammaherpesvirinae</taxon>
        <taxon>Rhadinovirus</taxon>
        <taxon>Rhadinovirus saimiriinegamma2</taxon>
        <taxon>Saimiriine herpesvirus 2</taxon>
    </lineage>
</organism>
<proteinExistence type="evidence at protein level"/>
<organismHost>
    <name type="scientific">Saimiri sciureus</name>
    <name type="common">Common squirrel monkey</name>
    <dbReference type="NCBI Taxonomy" id="9521"/>
</organismHost>
<comment type="function">
    <text>May be highly relevant to the process of cellular transformation and rapid T-cell proliferation effected by HVS during latent infections of T-cells in susceptible hosts.</text>
</comment>
<comment type="similarity">
    <text evidence="1">Belongs to the cyclin family. Cyclin D subfamily.</text>
</comment>
<keyword id="KW-0002">3D-structure</keyword>
<keyword id="KW-0131">Cell cycle</keyword>
<keyword id="KW-0132">Cell division</keyword>
<keyword id="KW-0195">Cyclin</keyword>
<keyword id="KW-0945">Host-virus interaction</keyword>
<keyword id="KW-1120">Modulation of host cell cycle by viral cyclin-like protein</keyword>
<keyword id="KW-1121">Modulation of host cell cycle by virus</keyword>
<keyword id="KW-1185">Reference proteome</keyword>
<accession>Q01043</accession>
<gene>
    <name type="primary">72</name>
    <name type="synonym">ECLF2</name>
</gene>
<evidence type="ECO:0000305" key="1"/>
<evidence type="ECO:0007829" key="2">
    <source>
        <dbReference type="PDB" id="1BU2"/>
    </source>
</evidence>
<evidence type="ECO:0007829" key="3">
    <source>
        <dbReference type="PDB" id="1XO2"/>
    </source>
</evidence>
<evidence type="ECO:0007829" key="4">
    <source>
        <dbReference type="PDB" id="2F2C"/>
    </source>
</evidence>
<dbReference type="EMBL" id="S76368">
    <property type="protein sequence ID" value="AAB21115.1"/>
    <property type="molecule type" value="Genomic_DNA"/>
</dbReference>
<dbReference type="EMBL" id="X64346">
    <property type="protein sequence ID" value="CAA45695.1"/>
    <property type="molecule type" value="Genomic_DNA"/>
</dbReference>
<dbReference type="EMBL" id="M86409">
    <property type="protein sequence ID" value="AAA46148.1"/>
    <property type="molecule type" value="Genomic_DNA"/>
</dbReference>
<dbReference type="RefSeq" id="NP_040274.1">
    <property type="nucleotide sequence ID" value="NC_001350.1"/>
</dbReference>
<dbReference type="PDB" id="1BU2">
    <property type="method" value="X-ray"/>
    <property type="resolution" value="3.00 A"/>
    <property type="chains" value="A=22-250"/>
</dbReference>
<dbReference type="PDB" id="1JOW">
    <property type="method" value="X-ray"/>
    <property type="resolution" value="3.10 A"/>
    <property type="chains" value="A=1-254"/>
</dbReference>
<dbReference type="PDB" id="1XO2">
    <property type="method" value="X-ray"/>
    <property type="resolution" value="2.90 A"/>
    <property type="chains" value="A=1-254"/>
</dbReference>
<dbReference type="PDB" id="2EUF">
    <property type="method" value="X-ray"/>
    <property type="resolution" value="3.00 A"/>
    <property type="chains" value="A=1-254"/>
</dbReference>
<dbReference type="PDB" id="2F2C">
    <property type="method" value="X-ray"/>
    <property type="resolution" value="2.80 A"/>
    <property type="chains" value="A=1-254"/>
</dbReference>
<dbReference type="PDB" id="4TTH">
    <property type="method" value="X-ray"/>
    <property type="resolution" value="2.90 A"/>
    <property type="chains" value="A=1-254"/>
</dbReference>
<dbReference type="PDBsum" id="1BU2"/>
<dbReference type="PDBsum" id="1JOW"/>
<dbReference type="PDBsum" id="1XO2"/>
<dbReference type="PDBsum" id="2EUF"/>
<dbReference type="PDBsum" id="2F2C"/>
<dbReference type="PDBsum" id="4TTH"/>
<dbReference type="SMR" id="Q01043"/>
<dbReference type="MINT" id="Q01043"/>
<dbReference type="BindingDB" id="Q01043"/>
<dbReference type="DrugBank" id="DB07379">
    <property type="generic name" value="(2S)-2-({6-[(3-Amino-5-chlorophenyl)amino]-9-isopropyl-9H-purin-2-yl}amino)-3-methyl-1-butanol"/>
</dbReference>
<dbReference type="DrugBank" id="DB07795">
    <property type="generic name" value="Fisetin"/>
</dbReference>
<dbReference type="KEGG" id="vg:1682479"/>
<dbReference type="EvolutionaryTrace" id="Q01043"/>
<dbReference type="Proteomes" id="UP000000587">
    <property type="component" value="Segment"/>
</dbReference>
<dbReference type="GO" id="GO:0051301">
    <property type="term" value="P:cell division"/>
    <property type="evidence" value="ECO:0007669"/>
    <property type="project" value="UniProtKB-KW"/>
</dbReference>
<dbReference type="GO" id="GO:0044071">
    <property type="term" value="P:symbiont-mediated perturbation of host cell cycle progression"/>
    <property type="evidence" value="ECO:0007669"/>
    <property type="project" value="UniProtKB-KW"/>
</dbReference>
<dbReference type="CDD" id="cd20517">
    <property type="entry name" value="CYCLIN_vCyC_rpt1"/>
    <property type="match status" value="1"/>
</dbReference>
<dbReference type="CDD" id="cd20518">
    <property type="entry name" value="CYCLIN_vCyC_rpt2"/>
    <property type="match status" value="1"/>
</dbReference>
<dbReference type="FunFam" id="1.10.472.10:FF:000057">
    <property type="entry name" value="Cyclin N-terminal domain containing 2"/>
    <property type="match status" value="1"/>
</dbReference>
<dbReference type="Gene3D" id="1.10.472.10">
    <property type="entry name" value="Cyclin-like"/>
    <property type="match status" value="2"/>
</dbReference>
<dbReference type="InterPro" id="IPR039361">
    <property type="entry name" value="Cyclin"/>
</dbReference>
<dbReference type="InterPro" id="IPR013763">
    <property type="entry name" value="Cyclin-like_dom"/>
</dbReference>
<dbReference type="InterPro" id="IPR036915">
    <property type="entry name" value="Cyclin-like_sf"/>
</dbReference>
<dbReference type="InterPro" id="IPR015322">
    <property type="entry name" value="Cyclin_dom_herpesvir"/>
</dbReference>
<dbReference type="InterPro" id="IPR017285">
    <property type="entry name" value="Cyclin_herpesvir"/>
</dbReference>
<dbReference type="InterPro" id="IPR006671">
    <property type="entry name" value="Cyclin_N"/>
</dbReference>
<dbReference type="InterPro" id="IPR048258">
    <property type="entry name" value="Cyclins_cyclin-box"/>
</dbReference>
<dbReference type="PANTHER" id="PTHR10177">
    <property type="entry name" value="CYCLINS"/>
    <property type="match status" value="1"/>
</dbReference>
<dbReference type="Pfam" id="PF00134">
    <property type="entry name" value="Cyclin_N"/>
    <property type="match status" value="1"/>
</dbReference>
<dbReference type="Pfam" id="PF09241">
    <property type="entry name" value="Herp-Cyclin"/>
    <property type="match status" value="1"/>
</dbReference>
<dbReference type="PIRSF" id="PIRSF037816">
    <property type="entry name" value="Viral_cyclin"/>
    <property type="match status" value="1"/>
</dbReference>
<dbReference type="SMART" id="SM00385">
    <property type="entry name" value="CYCLIN"/>
    <property type="match status" value="1"/>
</dbReference>
<dbReference type="SUPFAM" id="SSF47954">
    <property type="entry name" value="Cyclin-like"/>
    <property type="match status" value="2"/>
</dbReference>
<dbReference type="PROSITE" id="PS00292">
    <property type="entry name" value="CYCLINS"/>
    <property type="match status" value="1"/>
</dbReference>
<feature type="chain" id="PRO_0000080509" description="Cyclin homolog">
    <location>
        <begin position="1"/>
        <end position="254"/>
    </location>
</feature>
<feature type="helix" evidence="4">
    <location>
        <begin position="15"/>
        <end position="18"/>
    </location>
</feature>
<feature type="helix" evidence="4">
    <location>
        <begin position="21"/>
        <end position="31"/>
    </location>
</feature>
<feature type="turn" evidence="4">
    <location>
        <begin position="40"/>
        <end position="43"/>
    </location>
</feature>
<feature type="strand" evidence="2">
    <location>
        <begin position="45"/>
        <end position="47"/>
    </location>
</feature>
<feature type="helix" evidence="4">
    <location>
        <begin position="49"/>
        <end position="65"/>
    </location>
</feature>
<feature type="helix" evidence="4">
    <location>
        <begin position="72"/>
        <end position="83"/>
    </location>
</feature>
<feature type="turn" evidence="4">
    <location>
        <begin position="84"/>
        <end position="86"/>
    </location>
</feature>
<feature type="turn" evidence="4">
    <location>
        <begin position="91"/>
        <end position="93"/>
    </location>
</feature>
<feature type="helix" evidence="4">
    <location>
        <begin position="94"/>
        <end position="109"/>
    </location>
</feature>
<feature type="helix" evidence="4">
    <location>
        <begin position="116"/>
        <end position="119"/>
    </location>
</feature>
<feature type="turn" evidence="2">
    <location>
        <begin position="122"/>
        <end position="125"/>
    </location>
</feature>
<feature type="helix" evidence="4">
    <location>
        <begin position="129"/>
        <end position="142"/>
    </location>
</feature>
<feature type="turn" evidence="4">
    <location>
        <begin position="143"/>
        <end position="145"/>
    </location>
</feature>
<feature type="helix" evidence="4">
    <location>
        <begin position="152"/>
        <end position="154"/>
    </location>
</feature>
<feature type="helix" evidence="4">
    <location>
        <begin position="156"/>
        <end position="162"/>
    </location>
</feature>
<feature type="helix" evidence="4">
    <location>
        <begin position="167"/>
        <end position="169"/>
    </location>
</feature>
<feature type="helix" evidence="4">
    <location>
        <begin position="170"/>
        <end position="184"/>
    </location>
</feature>
<feature type="helix" evidence="4">
    <location>
        <begin position="188"/>
        <end position="190"/>
    </location>
</feature>
<feature type="strand" evidence="3">
    <location>
        <begin position="191"/>
        <end position="193"/>
    </location>
</feature>
<feature type="helix" evidence="4">
    <location>
        <begin position="195"/>
        <end position="208"/>
    </location>
</feature>
<feature type="helix" evidence="4">
    <location>
        <begin position="218"/>
        <end position="228"/>
    </location>
</feature>
<feature type="helix" evidence="4">
    <location>
        <begin position="232"/>
        <end position="247"/>
    </location>
</feature>
<feature type="helix" evidence="4">
    <location>
        <begin position="251"/>
        <end position="253"/>
    </location>
</feature>
<sequence>MADSPNRLNRAKIDSTTMKDPRVLNNLKLRELLLPKFTSLWEIQTEVTVDNRTILLTWMHLLCESFELDKSVFPLSVSILDRYLCKKQGTKKTLQKIGAACVLIGSKIRTVKPMTVSKLTYLSCDCFTNLELINQEKDILEALKWDTEAVLATDFLIPLCNALKIPEDLWPQLYEAASTTICKALIQPNIALLSPGLICAGGLLTTIETDNTNCRPWTCYLEDLSSILNFSTNTVRTVKDQVSEAFSLYDLEIL</sequence>
<reference key="1">
    <citation type="journal article" date="1992" name="J. Virol.">
        <title>Primary structure of the herpesvirus saimiri genome.</title>
        <authorList>
            <person name="Albrecht J.-C."/>
            <person name="Nicholas J."/>
            <person name="Biller D."/>
            <person name="Cameron K.R."/>
            <person name="Biesinger B."/>
            <person name="Newman C."/>
            <person name="Wittmann S."/>
            <person name="Craxton M.A."/>
            <person name="Coleman H."/>
            <person name="Fleckenstein B."/>
            <person name="Honess R.W."/>
        </authorList>
    </citation>
    <scope>NUCLEOTIDE SEQUENCE [LARGE SCALE GENOMIC DNA]</scope>
</reference>
<reference key="2">
    <citation type="journal article" date="1992" name="Virology">
        <title>Analysis of nucleotide sequence of the rightmost 43 kbp of herpesvirus saimiri (HVS) L-DNA: general conservation of genetic organization between HVS and Epstein-Barr virus.</title>
        <authorList>
            <person name="Nicholas J."/>
            <person name="Cameron K.R."/>
            <person name="Coleman H."/>
            <person name="Newman C."/>
            <person name="Honess R.W."/>
        </authorList>
    </citation>
    <scope>NUCLEOTIDE SEQUENCE [GENOMIC DNA]</scope>
</reference>
<reference key="3">
    <citation type="journal article" date="1992" name="Nature">
        <title>Herpesvirus saimiri encodes homologues of G protein-coupled receptors and cyclins.</title>
        <authorList>
            <person name="Nicholas J."/>
            <person name="Cameron K.R."/>
            <person name="Honess R.W."/>
        </authorList>
    </citation>
    <scope>SIMILARITY TO G-PROTEIN COUPLED RECEPTORS</scope>
</reference>
<reference key="4">
    <citation type="journal article" date="1999" name="Structure">
        <title>Crystal structure of a viral cyclin, a positive regulator of cyclin-dependent kinase 6.</title>
        <authorList>
            <person name="Schulze-Gahmen U."/>
            <person name="Jung J.U."/>
            <person name="Kim S.-H."/>
        </authorList>
    </citation>
    <scope>X-RAY CRYSTALLOGRAPHY (3.0 ANGSTROMS) OF 22-250</scope>
</reference>
<name>CGH2_SHV21</name>
<protein>
    <recommendedName>
        <fullName>Cyclin homolog</fullName>
    </recommendedName>
    <alternativeName>
        <fullName>V-cyclin</fullName>
    </alternativeName>
</protein>